<comment type="function">
    <text evidence="13 14">Component of the mitochondrial ribosome (mitoribosome), a dedicated translation machinery responsible for the synthesis of mitochondrial genome-encoded proteins, including at least some of the essential transmembrane subunits of the mitochondrial respiratory chain. The mitoribosomes are attached to the mitochondrial inner membrane and translation products are cotranslationally integrated into the membrane.</text>
</comment>
<comment type="subunit">
    <text evidence="2 3 4 9">Component of the mitochondrial small ribosomal subunit (mt-SSU). Mature yeast 74S mitochondrial ribosomes consist of a small (37S) and a large (54S) subunit. The 37S small subunit contains a 15S ribosomal RNA (15S mt-rRNA) and 34 different proteins. The 54S large subunit contains a 21S rRNA (21S mt-rRNA) and 46 different proteins. uS3m, uS4m and uS5m form the narrow entry site of the mRNA channel.</text>
</comment>
<comment type="subcellular location">
    <subcellularLocation>
        <location evidence="2 5 7">Mitochondrion</location>
    </subcellularLocation>
    <text evidence="8">Mitoribosomes are tethered to the mitochondrial inner membrane and spatially aligned with the membrane insertion machinery through two distinct membrane contact sites, formed by the 21S rRNA expansion segment 96-ES1 and the inner membrane protein MBA1.</text>
</comment>
<comment type="miscellaneous">
    <text evidence="6">Present with 3270 molecules/cell in log phase SD medium.</text>
</comment>
<comment type="similarity">
    <text evidence="12">Belongs to the universal ribosomal protein uS4 family.</text>
</comment>
<proteinExistence type="evidence at protein level"/>
<gene>
    <name type="primary">NAM9</name>
    <name type="synonym">MNA6</name>
    <name type="ordered locus">YNL137C</name>
    <name type="ORF">N1211</name>
    <name type="ORF">N1840</name>
</gene>
<sequence length="486" mass="56356">MPRKANLLKSLARGRVRTSFNKYNLFNLYKKGGVDLKSKSLYQQKWTAKQETRAYHGEHLTEKRWQTVFKPKLDSVAQLDASLRGGEIKETPFLLQTFAVLEKRLDFALFRAMFASSVRQARQFILHGNVRVNGVKIKHPSYTLKPGDMFSVKPDKVLEALGAKKPSFQEALKIDKTQIVLWNKYVKEAKTEPKEVWEKKLENFEKMSDSNPKKLQFQEFLRQYNKNLESQQYNALKGCTQEGILRKLLNVEKEIGKSNNEPLSIDELKQGLPEIQDSQLLESLNNAYQEFFKSGEIRREIISKCQPDELISLATEMMNPNETTKKELSDGAKSALRSGKRIIAESVKLWTKNITDHFKTRMSDISDGSLTFDPKWAKNLKYHDPIKLSELEGDEPKARKLINLPWQKNYVYGRQDPKKPFFTPWKPRPFLSPFAILPHHLEISFKTCHAVYLRDPVARPGQSEVISPFDVPVHERAYMYYLRNGK</sequence>
<feature type="chain" id="PRO_0000030639" description="Small ribosomal subunit protein uS4m">
    <location>
        <begin position="1"/>
        <end position="486"/>
    </location>
</feature>
<feature type="domain" description="S4 RNA-binding" evidence="1">
    <location>
        <begin position="103"/>
        <end position="172"/>
    </location>
</feature>
<feature type="mutagenesis site" description="In NAM9-1; suppressor for ocher mutations in mitochondrial DNA, possibly through decreasing the fidelity of translation." evidence="10">
    <original>S</original>
    <variation>L</variation>
    <location>
        <position position="82"/>
    </location>
</feature>
<feature type="mutagenesis site" description="In MNA6-3; causes temperature-dependent loss of the 15S rRNA." evidence="2">
    <original>L</original>
    <variation>F</variation>
    <location>
        <position position="109"/>
    </location>
</feature>
<feature type="mutagenesis site" description="In MNA6-1; causes temperature-dependent loss of the 15S rRNA." evidence="2">
    <original>R</original>
    <variation>K</variation>
    <location>
        <position position="111"/>
    </location>
</feature>
<feature type="mutagenesis site" description="In MNA6-4; causes temperature-dependent loss of the 15S rRNA." evidence="2">
    <original>P</original>
    <variation>L</variation>
    <location>
        <position position="424"/>
    </location>
</feature>
<feature type="mutagenesis site" description="In MNA6-2; causes temperature-dependent loss of the 15S rRNA." evidence="2">
    <original>P</original>
    <variation>L</variation>
    <location>
        <position position="438"/>
    </location>
</feature>
<feature type="turn" evidence="16">
    <location>
        <begin position="11"/>
        <end position="13"/>
    </location>
</feature>
<feature type="helix" evidence="16">
    <location>
        <begin position="22"/>
        <end position="31"/>
    </location>
</feature>
<feature type="helix" evidence="16">
    <location>
        <begin position="41"/>
        <end position="55"/>
    </location>
</feature>
<feature type="turn" evidence="16">
    <location>
        <begin position="56"/>
        <end position="59"/>
    </location>
</feature>
<feature type="helix" evidence="16">
    <location>
        <begin position="62"/>
        <end position="68"/>
    </location>
</feature>
<feature type="strand" evidence="16">
    <location>
        <begin position="75"/>
        <end position="78"/>
    </location>
</feature>
<feature type="helix" evidence="16">
    <location>
        <begin position="93"/>
        <end position="103"/>
    </location>
</feature>
<feature type="helix" evidence="16">
    <location>
        <begin position="105"/>
        <end position="111"/>
    </location>
</feature>
<feature type="strand" evidence="16">
    <location>
        <begin position="114"/>
        <end position="117"/>
    </location>
</feature>
<feature type="helix" evidence="16">
    <location>
        <begin position="118"/>
        <end position="126"/>
    </location>
</feature>
<feature type="strand" evidence="16">
    <location>
        <begin position="130"/>
        <end position="132"/>
    </location>
</feature>
<feature type="strand" evidence="16">
    <location>
        <begin position="149"/>
        <end position="152"/>
    </location>
</feature>
<feature type="helix" evidence="16">
    <location>
        <begin position="154"/>
        <end position="161"/>
    </location>
</feature>
<feature type="helix" evidence="16">
    <location>
        <begin position="168"/>
        <end position="191"/>
    </location>
</feature>
<feature type="helix" evidence="16">
    <location>
        <begin position="193"/>
        <end position="206"/>
    </location>
</feature>
<feature type="helix" evidence="16">
    <location>
        <begin position="212"/>
        <end position="218"/>
    </location>
</feature>
<feature type="helix" evidence="16">
    <location>
        <begin position="375"/>
        <end position="379"/>
    </location>
</feature>
<feature type="helix" evidence="16">
    <location>
        <begin position="388"/>
        <end position="391"/>
    </location>
</feature>
<feature type="helix" evidence="16">
    <location>
        <begin position="395"/>
        <end position="401"/>
    </location>
</feature>
<feature type="strand" evidence="16">
    <location>
        <begin position="405"/>
        <end position="410"/>
    </location>
</feature>
<feature type="strand" evidence="15">
    <location>
        <begin position="414"/>
        <end position="416"/>
    </location>
</feature>
<feature type="strand" evidence="16">
    <location>
        <begin position="419"/>
        <end position="421"/>
    </location>
</feature>
<feature type="helix" evidence="16">
    <location>
        <begin position="432"/>
        <end position="434"/>
    </location>
</feature>
<feature type="strand" evidence="16">
    <location>
        <begin position="439"/>
        <end position="444"/>
    </location>
</feature>
<feature type="turn" evidence="16">
    <location>
        <begin position="445"/>
        <end position="448"/>
    </location>
</feature>
<feature type="strand" evidence="16">
    <location>
        <begin position="449"/>
        <end position="452"/>
    </location>
</feature>
<feature type="strand" evidence="16">
    <location>
        <begin position="462"/>
        <end position="465"/>
    </location>
</feature>
<feature type="helix" evidence="16">
    <location>
        <begin position="471"/>
        <end position="482"/>
    </location>
</feature>
<feature type="turn" evidence="16">
    <location>
        <begin position="483"/>
        <end position="485"/>
    </location>
</feature>
<name>NAM9_YEAST</name>
<evidence type="ECO:0000255" key="1">
    <source>
        <dbReference type="PROSITE-ProRule" id="PRU00182"/>
    </source>
</evidence>
<evidence type="ECO:0000269" key="2">
    <source>
    </source>
</evidence>
<evidence type="ECO:0000269" key="3">
    <source>
    </source>
</evidence>
<evidence type="ECO:0000269" key="4">
    <source>
    </source>
</evidence>
<evidence type="ECO:0000269" key="5">
    <source>
    </source>
</evidence>
<evidence type="ECO:0000269" key="6">
    <source>
    </source>
</evidence>
<evidence type="ECO:0000269" key="7">
    <source>
    </source>
</evidence>
<evidence type="ECO:0000269" key="8">
    <source>
    </source>
</evidence>
<evidence type="ECO:0000269" key="9">
    <source>
    </source>
</evidence>
<evidence type="ECO:0000269" key="10">
    <source>
    </source>
</evidence>
<evidence type="ECO:0000303" key="11">
    <source>
    </source>
</evidence>
<evidence type="ECO:0000305" key="12"/>
<evidence type="ECO:0000305" key="13">
    <source>
    </source>
</evidence>
<evidence type="ECO:0000305" key="14">
    <source>
    </source>
</evidence>
<evidence type="ECO:0007829" key="15">
    <source>
        <dbReference type="PDB" id="8D8K"/>
    </source>
</evidence>
<evidence type="ECO:0007829" key="16">
    <source>
        <dbReference type="PDB" id="8D8L"/>
    </source>
</evidence>
<organism>
    <name type="scientific">Saccharomyces cerevisiae (strain ATCC 204508 / S288c)</name>
    <name type="common">Baker's yeast</name>
    <dbReference type="NCBI Taxonomy" id="559292"/>
    <lineage>
        <taxon>Eukaryota</taxon>
        <taxon>Fungi</taxon>
        <taxon>Dikarya</taxon>
        <taxon>Ascomycota</taxon>
        <taxon>Saccharomycotina</taxon>
        <taxon>Saccharomycetes</taxon>
        <taxon>Saccharomycetales</taxon>
        <taxon>Saccharomycetaceae</taxon>
        <taxon>Saccharomyces</taxon>
    </lineage>
</organism>
<protein>
    <recommendedName>
        <fullName evidence="11">Small ribosomal subunit protein uS4m</fullName>
    </recommendedName>
    <alternativeName>
        <fullName>37S ribosomal protein NAM9, mitochondrial</fullName>
    </alternativeName>
    <alternativeName>
        <fullName>Nuclear accommodation of mitochondria protein 9</fullName>
    </alternativeName>
</protein>
<reference key="1">
    <citation type="journal article" date="1992" name="Mol. Cell. Biol.">
        <title>NAM9 nuclear suppressor of mitochondrial ochre mutations in Saccharomyces cerevisiae codes for a protein homologous to S4 ribosomal proteins from chloroplasts, bacteria, and eucaryotes.</title>
        <authorList>
            <person name="Boguta M."/>
            <person name="Dmochowska A."/>
            <person name="Borsuk P."/>
            <person name="Wrobel K."/>
            <person name="Gargouri A."/>
            <person name="Lazowska J."/>
            <person name="Slonimski P.P."/>
            <person name="Szczesniak B."/>
            <person name="Kruszewska A."/>
        </authorList>
    </citation>
    <scope>NUCLEOTIDE SEQUENCE</scope>
</reference>
<reference key="2">
    <citation type="submission" date="1994-06" db="EMBL/GenBank/DDBJ databases">
        <authorList>
            <person name="Boguta M."/>
        </authorList>
    </citation>
    <scope>SEQUENCE REVISION</scope>
</reference>
<reference key="3">
    <citation type="journal article" date="1995" name="Yeast">
        <title>A 43.5 kb segment of yeast chromosome XIV, which contains MFA2, MEP2, CAP/SRV2, NAM9, FKB1/FPR1/RBP1, MOM22 and CPT1, predicts an adenosine deaminase gene and 14 new open reading frames.</title>
        <authorList>
            <person name="Mallet L."/>
            <person name="Bussereau F."/>
            <person name="Jacquet M."/>
        </authorList>
    </citation>
    <scope>NUCLEOTIDE SEQUENCE [GENOMIC DNA]</scope>
    <source>
        <strain>ATCC 204508 / S288c</strain>
    </source>
</reference>
<reference key="4">
    <citation type="journal article" date="1997" name="Nature">
        <title>The nucleotide sequence of Saccharomyces cerevisiae chromosome XIV and its evolutionary implications.</title>
        <authorList>
            <person name="Philippsen P."/>
            <person name="Kleine K."/>
            <person name="Poehlmann R."/>
            <person name="Duesterhoeft A."/>
            <person name="Hamberg K."/>
            <person name="Hegemann J.H."/>
            <person name="Obermaier B."/>
            <person name="Urrestarazu L.A."/>
            <person name="Aert R."/>
            <person name="Albermann K."/>
            <person name="Altmann R."/>
            <person name="Andre B."/>
            <person name="Baladron V."/>
            <person name="Ballesta J.P.G."/>
            <person name="Becam A.-M."/>
            <person name="Beinhauer J.D."/>
            <person name="Boskovic J."/>
            <person name="Buitrago M.J."/>
            <person name="Bussereau F."/>
            <person name="Coster F."/>
            <person name="Crouzet M."/>
            <person name="D'Angelo M."/>
            <person name="Dal Pero F."/>
            <person name="De Antoni A."/>
            <person name="del Rey F."/>
            <person name="Doignon F."/>
            <person name="Domdey H."/>
            <person name="Dubois E."/>
            <person name="Fiedler T.A."/>
            <person name="Fleig U."/>
            <person name="Floeth M."/>
            <person name="Fritz C."/>
            <person name="Gaillardin C."/>
            <person name="Garcia-Cantalejo J.M."/>
            <person name="Glansdorff N."/>
            <person name="Goffeau A."/>
            <person name="Gueldener U."/>
            <person name="Herbert C.J."/>
            <person name="Heumann K."/>
            <person name="Heuss-Neitzel D."/>
            <person name="Hilbert H."/>
            <person name="Hinni K."/>
            <person name="Iraqui Houssaini I."/>
            <person name="Jacquet M."/>
            <person name="Jimenez A."/>
            <person name="Jonniaux J.-L."/>
            <person name="Karpfinger-Hartl L."/>
            <person name="Lanfranchi G."/>
            <person name="Lepingle A."/>
            <person name="Levesque H."/>
            <person name="Lyck R."/>
            <person name="Maftahi M."/>
            <person name="Mallet L."/>
            <person name="Maurer C.T.C."/>
            <person name="Messenguy F."/>
            <person name="Mewes H.-W."/>
            <person name="Moestl D."/>
            <person name="Nasr F."/>
            <person name="Nicaud J.-M."/>
            <person name="Niedenthal R.K."/>
            <person name="Pandolfo D."/>
            <person name="Pierard A."/>
            <person name="Piravandi E."/>
            <person name="Planta R.J."/>
            <person name="Pohl T.M."/>
            <person name="Purnelle B."/>
            <person name="Rebischung C."/>
            <person name="Remacha M.A."/>
            <person name="Revuelta J.L."/>
            <person name="Rinke M."/>
            <person name="Saiz J.E."/>
            <person name="Sartorello F."/>
            <person name="Scherens B."/>
            <person name="Sen-Gupta M."/>
            <person name="Soler-Mira A."/>
            <person name="Urbanus J.H.M."/>
            <person name="Valle G."/>
            <person name="Van Dyck L."/>
            <person name="Verhasselt P."/>
            <person name="Vierendeels F."/>
            <person name="Vissers S."/>
            <person name="Voet M."/>
            <person name="Volckaert G."/>
            <person name="Wach A."/>
            <person name="Wambutt R."/>
            <person name="Wedler H."/>
            <person name="Zollner A."/>
            <person name="Hani J."/>
        </authorList>
    </citation>
    <scope>NUCLEOTIDE SEQUENCE [LARGE SCALE GENOMIC DNA]</scope>
    <source>
        <strain>ATCC 204508 / S288c</strain>
    </source>
</reference>
<reference key="5">
    <citation type="journal article" date="2014" name="G3 (Bethesda)">
        <title>The reference genome sequence of Saccharomyces cerevisiae: Then and now.</title>
        <authorList>
            <person name="Engel S.R."/>
            <person name="Dietrich F.S."/>
            <person name="Fisk D.G."/>
            <person name="Binkley G."/>
            <person name="Balakrishnan R."/>
            <person name="Costanzo M.C."/>
            <person name="Dwight S.S."/>
            <person name="Hitz B.C."/>
            <person name="Karra K."/>
            <person name="Nash R.S."/>
            <person name="Weng S."/>
            <person name="Wong E.D."/>
            <person name="Lloyd P."/>
            <person name="Skrzypek M.S."/>
            <person name="Miyasato S.R."/>
            <person name="Simison M."/>
            <person name="Cherry J.M."/>
        </authorList>
    </citation>
    <scope>GENOME REANNOTATION</scope>
    <source>
        <strain>ATCC 204508 / S288c</strain>
    </source>
</reference>
<reference key="6">
    <citation type="journal article" date="1995" name="Gene">
        <title>The NAM9-1 suppressor mutation in a nuclear gene encoding ribosomal mitochondrial protein of Saccharomyces cerevisiae.</title>
        <authorList>
            <person name="Dmochowska A."/>
            <person name="Konopinska A."/>
            <person name="Krzymowska M."/>
            <person name="Szczesniak B."/>
            <person name="Boguta M."/>
        </authorList>
    </citation>
    <scope>FUNCTION</scope>
    <scope>MUTAGENESIS OF SER-82</scope>
</reference>
<reference key="7">
    <citation type="journal article" date="1999" name="Biochemistry">
        <title>The single amino acid changes in the yeast mitochondrial S4 ribosomal protein cause temperature-sensitive defect in the accumulation of mitochondrial 15S rRNA.</title>
        <authorList>
            <person name="Biswas T.K."/>
            <person name="Getz G.S."/>
        </authorList>
    </citation>
    <scope>SUBUNIT</scope>
    <scope>SUBCELLULAR LOCATION</scope>
    <scope>MUTAGENESIS OF LEU-109; ARG-111; PRO-424 AND PRO-438</scope>
</reference>
<reference key="8">
    <citation type="journal article" date="2001" name="J. Biol. Chem.">
        <title>Identification of 12 new yeast mitochondrial ribosomal proteins including 6 that have no prokaryotic homologues.</title>
        <authorList>
            <person name="Saveanu C."/>
            <person name="Fromont-Racine M."/>
            <person name="Harington A."/>
            <person name="Ricard F."/>
            <person name="Namane A."/>
            <person name="Jacquier A."/>
        </authorList>
    </citation>
    <scope>IDENTIFICATION IN THE MITOCHONDRIAL RIBOSOMAL SMALL COMPLEX</scope>
    <scope>IDENTIFICATION BY MASS SPECTROMETRY</scope>
</reference>
<reference key="9">
    <citation type="journal article" date="2002" name="Eur. J. Biochem.">
        <title>Tag-mediated isolation of yeast mitochondrial ribosome and mass spectrometric identification of its new components.</title>
        <authorList>
            <person name="Gan X."/>
            <person name="Kitakawa M."/>
            <person name="Yoshino K."/>
            <person name="Oshiro N."/>
            <person name="Yonezawa K."/>
            <person name="Isono K."/>
        </authorList>
    </citation>
    <scope>IDENTIFICATION IN THE MITOCHONDRIAL RIBOSOMAL SMALL COMPLEX</scope>
    <scope>IDENTIFICATION BY MASS SPECTROMETRY</scope>
</reference>
<reference key="10">
    <citation type="journal article" date="2003" name="Nature">
        <title>Global analysis of protein localization in budding yeast.</title>
        <authorList>
            <person name="Huh W.-K."/>
            <person name="Falvo J.V."/>
            <person name="Gerke L.C."/>
            <person name="Carroll A.S."/>
            <person name="Howson R.W."/>
            <person name="Weissman J.S."/>
            <person name="O'Shea E.K."/>
        </authorList>
    </citation>
    <scope>SUBCELLULAR LOCATION [LARGE SCALE ANALYSIS]</scope>
</reference>
<reference key="11">
    <citation type="journal article" date="2003" name="Nature">
        <title>Global analysis of protein expression in yeast.</title>
        <authorList>
            <person name="Ghaemmaghami S."/>
            <person name="Huh W.-K."/>
            <person name="Bower K."/>
            <person name="Howson R.W."/>
            <person name="Belle A."/>
            <person name="Dephoure N."/>
            <person name="O'Shea E.K."/>
            <person name="Weissman J.S."/>
        </authorList>
    </citation>
    <scope>LEVEL OF PROTEIN EXPRESSION [LARGE SCALE ANALYSIS]</scope>
</reference>
<reference key="12">
    <citation type="journal article" date="2003" name="Proc. Natl. Acad. Sci. U.S.A.">
        <title>The proteome of Saccharomyces cerevisiae mitochondria.</title>
        <authorList>
            <person name="Sickmann A."/>
            <person name="Reinders J."/>
            <person name="Wagner Y."/>
            <person name="Joppich C."/>
            <person name="Zahedi R.P."/>
            <person name="Meyer H.E."/>
            <person name="Schoenfisch B."/>
            <person name="Perschil I."/>
            <person name="Chacinska A."/>
            <person name="Guiard B."/>
            <person name="Rehling P."/>
            <person name="Pfanner N."/>
            <person name="Meisinger C."/>
        </authorList>
    </citation>
    <scope>SUBCELLULAR LOCATION [LARGE SCALE ANALYSIS]</scope>
    <source>
        <strain>ATCC 76625 / YPH499</strain>
    </source>
</reference>
<reference key="13">
    <citation type="journal article" date="2015" name="Nat. Commun.">
        <title>Organization of the mitochondrial translation machinery studied in situ by cryoelectron tomography.</title>
        <authorList>
            <person name="Pfeffer S."/>
            <person name="Woellhaf M.W."/>
            <person name="Herrmann J.M."/>
            <person name="Forster F."/>
        </authorList>
    </citation>
    <scope>SUBCELLULAR LOCATION</scope>
</reference>
<reference key="14">
    <citation type="journal article" date="2017" name="Science">
        <title>The structure of the yeast mitochondrial ribosome.</title>
        <authorList>
            <person name="Desai N."/>
            <person name="Brown A."/>
            <person name="Amunts A."/>
            <person name="Ramakrishnan V."/>
        </authorList>
    </citation>
    <scope>STRUCTURE BY ELECTRON MICROSCOPY (3.25 ANGSTROMS)</scope>
    <scope>SUBUNIT</scope>
</reference>
<accession>P27929</accession>
<accession>D6W145</accession>
<dbReference type="EMBL" id="M60730">
    <property type="protein sequence ID" value="AAA19439.1"/>
    <property type="molecule type" value="Unassigned_DNA"/>
</dbReference>
<dbReference type="EMBL" id="Z46843">
    <property type="protein sequence ID" value="CAA86888.1"/>
    <property type="molecule type" value="Genomic_DNA"/>
</dbReference>
<dbReference type="EMBL" id="Z71413">
    <property type="protein sequence ID" value="CAA96019.1"/>
    <property type="molecule type" value="Genomic_DNA"/>
</dbReference>
<dbReference type="EMBL" id="BK006947">
    <property type="protein sequence ID" value="DAA10411.1"/>
    <property type="molecule type" value="Genomic_DNA"/>
</dbReference>
<dbReference type="PIR" id="S55146">
    <property type="entry name" value="S55146"/>
</dbReference>
<dbReference type="RefSeq" id="NP_014262.3">
    <property type="nucleotide sequence ID" value="NM_001182975.3"/>
</dbReference>
<dbReference type="PDB" id="5MRC">
    <property type="method" value="EM"/>
    <property type="resolution" value="3.25 A"/>
    <property type="chains" value="DD=1-486"/>
</dbReference>
<dbReference type="PDB" id="5MRE">
    <property type="method" value="EM"/>
    <property type="resolution" value="3.75 A"/>
    <property type="chains" value="DD=1-486"/>
</dbReference>
<dbReference type="PDB" id="5MRF">
    <property type="method" value="EM"/>
    <property type="resolution" value="4.97 A"/>
    <property type="chains" value="DD=1-486"/>
</dbReference>
<dbReference type="PDB" id="8D8J">
    <property type="method" value="EM"/>
    <property type="resolution" value="3.80 A"/>
    <property type="chains" value="D=1-486"/>
</dbReference>
<dbReference type="PDB" id="8D8K">
    <property type="method" value="EM"/>
    <property type="resolution" value="3.13 A"/>
    <property type="chains" value="D=1-486"/>
</dbReference>
<dbReference type="PDB" id="8D8L">
    <property type="method" value="EM"/>
    <property type="resolution" value="2.60 A"/>
    <property type="chains" value="D=1-486"/>
</dbReference>
<dbReference type="PDB" id="8OM2">
    <property type="method" value="EM"/>
    <property type="resolution" value="2.57 A"/>
    <property type="chains" value="D=1-486"/>
</dbReference>
<dbReference type="PDB" id="8OM3">
    <property type="method" value="EM"/>
    <property type="resolution" value="2.87 A"/>
    <property type="chains" value="D=1-486"/>
</dbReference>
<dbReference type="PDB" id="8OM4">
    <property type="method" value="EM"/>
    <property type="resolution" value="2.32 A"/>
    <property type="chains" value="D=1-486"/>
</dbReference>
<dbReference type="PDBsum" id="5MRC"/>
<dbReference type="PDBsum" id="5MRE"/>
<dbReference type="PDBsum" id="5MRF"/>
<dbReference type="PDBsum" id="8D8J"/>
<dbReference type="PDBsum" id="8D8K"/>
<dbReference type="PDBsum" id="8D8L"/>
<dbReference type="PDBsum" id="8OM2"/>
<dbReference type="PDBsum" id="8OM3"/>
<dbReference type="PDBsum" id="8OM4"/>
<dbReference type="EMDB" id="EMD-16966"/>
<dbReference type="EMDB" id="EMD-16967"/>
<dbReference type="EMDB" id="EMD-16968"/>
<dbReference type="EMDB" id="EMD-27249"/>
<dbReference type="EMDB" id="EMD-27250"/>
<dbReference type="EMDB" id="EMD-27251"/>
<dbReference type="EMDB" id="EMD-3551"/>
<dbReference type="EMDB" id="EMD-3552"/>
<dbReference type="EMDB" id="EMD-3553"/>
<dbReference type="SMR" id="P27929"/>
<dbReference type="BioGRID" id="35689">
    <property type="interactions" value="97"/>
</dbReference>
<dbReference type="ComplexPortal" id="CPX-1603">
    <property type="entry name" value="37S mitochondrial small ribosomal subunit"/>
</dbReference>
<dbReference type="DIP" id="DIP-6702N"/>
<dbReference type="FunCoup" id="P27929">
    <property type="interactions" value="178"/>
</dbReference>
<dbReference type="IntAct" id="P27929">
    <property type="interactions" value="66"/>
</dbReference>
<dbReference type="MINT" id="P27929"/>
<dbReference type="STRING" id="4932.YNL137C"/>
<dbReference type="iPTMnet" id="P27929"/>
<dbReference type="PaxDb" id="4932-YNL137C"/>
<dbReference type="PeptideAtlas" id="P27929"/>
<dbReference type="EnsemblFungi" id="YNL137C_mRNA">
    <property type="protein sequence ID" value="YNL137C"/>
    <property type="gene ID" value="YNL137C"/>
</dbReference>
<dbReference type="GeneID" id="855585"/>
<dbReference type="KEGG" id="sce:YNL137C"/>
<dbReference type="AGR" id="SGD:S000005081"/>
<dbReference type="SGD" id="S000005081">
    <property type="gene designation" value="NAM9"/>
</dbReference>
<dbReference type="VEuPathDB" id="FungiDB:YNL137C"/>
<dbReference type="eggNOG" id="ENOG502QTS9">
    <property type="taxonomic scope" value="Eukaryota"/>
</dbReference>
<dbReference type="HOGENOM" id="CLU_026386_0_0_1"/>
<dbReference type="InParanoid" id="P27929"/>
<dbReference type="OMA" id="GDMFQVE"/>
<dbReference type="OrthoDB" id="3356781at2759"/>
<dbReference type="BioCyc" id="YEAST:G3O-33156-MONOMER"/>
<dbReference type="BioGRID-ORCS" id="855585">
    <property type="hits" value="1 hit in 10 CRISPR screens"/>
</dbReference>
<dbReference type="PRO" id="PR:P27929"/>
<dbReference type="Proteomes" id="UP000002311">
    <property type="component" value="Chromosome XIV"/>
</dbReference>
<dbReference type="RNAct" id="P27929">
    <property type="molecule type" value="protein"/>
</dbReference>
<dbReference type="GO" id="GO:0005743">
    <property type="term" value="C:mitochondrial inner membrane"/>
    <property type="evidence" value="ECO:0000303"/>
    <property type="project" value="ComplexPortal"/>
</dbReference>
<dbReference type="GO" id="GO:0005763">
    <property type="term" value="C:mitochondrial small ribosomal subunit"/>
    <property type="evidence" value="ECO:0000314"/>
    <property type="project" value="SGD"/>
</dbReference>
<dbReference type="GO" id="GO:0005739">
    <property type="term" value="C:mitochondrion"/>
    <property type="evidence" value="ECO:0007005"/>
    <property type="project" value="SGD"/>
</dbReference>
<dbReference type="GO" id="GO:0019843">
    <property type="term" value="F:rRNA binding"/>
    <property type="evidence" value="ECO:0000318"/>
    <property type="project" value="GO_Central"/>
</dbReference>
<dbReference type="GO" id="GO:0003735">
    <property type="term" value="F:structural constituent of ribosome"/>
    <property type="evidence" value="ECO:0000314"/>
    <property type="project" value="SGD"/>
</dbReference>
<dbReference type="GO" id="GO:0032543">
    <property type="term" value="P:mitochondrial translation"/>
    <property type="evidence" value="ECO:0000303"/>
    <property type="project" value="ComplexPortal"/>
</dbReference>
<dbReference type="GO" id="GO:0042274">
    <property type="term" value="P:ribosomal small subunit biogenesis"/>
    <property type="evidence" value="ECO:0000318"/>
    <property type="project" value="GO_Central"/>
</dbReference>
<dbReference type="CDD" id="cd00165">
    <property type="entry name" value="S4"/>
    <property type="match status" value="1"/>
</dbReference>
<dbReference type="FunFam" id="3.10.290.10:FF:000025">
    <property type="entry name" value="30S ribosomal subunit S4"/>
    <property type="match status" value="1"/>
</dbReference>
<dbReference type="Gene3D" id="3.10.290.10">
    <property type="entry name" value="RNA-binding S4 domain"/>
    <property type="match status" value="1"/>
</dbReference>
<dbReference type="InterPro" id="IPR022801">
    <property type="entry name" value="Ribosomal_uS4"/>
</dbReference>
<dbReference type="InterPro" id="IPR018079">
    <property type="entry name" value="Ribosomal_uS4_CS"/>
</dbReference>
<dbReference type="InterPro" id="IPR002942">
    <property type="entry name" value="S4_RNA-bd"/>
</dbReference>
<dbReference type="InterPro" id="IPR036986">
    <property type="entry name" value="S4_RNA-bd_sf"/>
</dbReference>
<dbReference type="PANTHER" id="PTHR11831">
    <property type="entry name" value="30S 40S RIBOSOMAL PROTEIN"/>
    <property type="match status" value="1"/>
</dbReference>
<dbReference type="PANTHER" id="PTHR11831:SF4">
    <property type="entry name" value="SMALL RIBOSOMAL SUBUNIT PROTEIN US4M"/>
    <property type="match status" value="1"/>
</dbReference>
<dbReference type="Pfam" id="PF01479">
    <property type="entry name" value="S4"/>
    <property type="match status" value="1"/>
</dbReference>
<dbReference type="SMART" id="SM00363">
    <property type="entry name" value="S4"/>
    <property type="match status" value="1"/>
</dbReference>
<dbReference type="SUPFAM" id="SSF55174">
    <property type="entry name" value="Alpha-L RNA-binding motif"/>
    <property type="match status" value="1"/>
</dbReference>
<dbReference type="PROSITE" id="PS00632">
    <property type="entry name" value="RIBOSOMAL_S4"/>
    <property type="match status" value="1"/>
</dbReference>
<dbReference type="PROSITE" id="PS50889">
    <property type="entry name" value="S4"/>
    <property type="match status" value="1"/>
</dbReference>
<keyword id="KW-0002">3D-structure</keyword>
<keyword id="KW-0496">Mitochondrion</keyword>
<keyword id="KW-1185">Reference proteome</keyword>
<keyword id="KW-0687">Ribonucleoprotein</keyword>
<keyword id="KW-0689">Ribosomal protein</keyword>
<keyword id="KW-0694">RNA-binding</keyword>
<keyword id="KW-0699">rRNA-binding</keyword>